<sequence length="151" mass="16693">MEQPPPADQPQQPPPPTLTNPRFTLELEFVSSLANPYYLSHLAVTYPNLLGINKSGDDSDVNNDSTDPDAQGFAAYLAYLYSYWKTPEYAQFLTHPGATLRALRLLQEETFRRDIIRPDVIERLAGTDIAAEPVDPAAESGDQEGEQAKAS</sequence>
<dbReference type="EMBL" id="AM270201">
    <property type="protein sequence ID" value="CAK40314.1"/>
    <property type="molecule type" value="Genomic_DNA"/>
</dbReference>
<dbReference type="RefSeq" id="XP_001393773.1">
    <property type="nucleotide sequence ID" value="XM_001393736.1"/>
</dbReference>
<dbReference type="SMR" id="A2QU71"/>
<dbReference type="EnsemblFungi" id="CAK40314">
    <property type="protein sequence ID" value="CAK40314"/>
    <property type="gene ID" value="An09g04600"/>
</dbReference>
<dbReference type="GeneID" id="4983994"/>
<dbReference type="KEGG" id="ang:An09g04600"/>
<dbReference type="VEuPathDB" id="FungiDB:An09g04600"/>
<dbReference type="HOGENOM" id="CLU_071681_1_0_1"/>
<dbReference type="Proteomes" id="UP000006706">
    <property type="component" value="Chromosome 1L"/>
</dbReference>
<dbReference type="GO" id="GO:0016592">
    <property type="term" value="C:mediator complex"/>
    <property type="evidence" value="ECO:0007669"/>
    <property type="project" value="InterPro"/>
</dbReference>
<dbReference type="GO" id="GO:0003712">
    <property type="term" value="F:transcription coregulator activity"/>
    <property type="evidence" value="ECO:0007669"/>
    <property type="project" value="InterPro"/>
</dbReference>
<dbReference type="GO" id="GO:0006355">
    <property type="term" value="P:regulation of DNA-templated transcription"/>
    <property type="evidence" value="ECO:0007669"/>
    <property type="project" value="InterPro"/>
</dbReference>
<dbReference type="FunFam" id="1.10.10.1340:FF:000002">
    <property type="entry name" value="Mediator of RNA polymerase II transcription subunit 31"/>
    <property type="match status" value="1"/>
</dbReference>
<dbReference type="Gene3D" id="1.10.10.1340">
    <property type="entry name" value="Mediator of RNA polymerase II, submodule Med31 (Soh1)"/>
    <property type="match status" value="1"/>
</dbReference>
<dbReference type="InterPro" id="IPR038089">
    <property type="entry name" value="Med31_sf"/>
</dbReference>
<dbReference type="InterPro" id="IPR008831">
    <property type="entry name" value="Mediator_Med31"/>
</dbReference>
<dbReference type="PANTHER" id="PTHR13186">
    <property type="entry name" value="MEDIATOR OF RNA POLYMERASE II TRANSCRIPTION SUBUNIT 31"/>
    <property type="match status" value="1"/>
</dbReference>
<dbReference type="Pfam" id="PF05669">
    <property type="entry name" value="Med31"/>
    <property type="match status" value="1"/>
</dbReference>
<reference key="1">
    <citation type="journal article" date="2007" name="Nat. Biotechnol.">
        <title>Genome sequencing and analysis of the versatile cell factory Aspergillus niger CBS 513.88.</title>
        <authorList>
            <person name="Pel H.J."/>
            <person name="de Winde J.H."/>
            <person name="Archer D.B."/>
            <person name="Dyer P.S."/>
            <person name="Hofmann G."/>
            <person name="Schaap P.J."/>
            <person name="Turner G."/>
            <person name="de Vries R.P."/>
            <person name="Albang R."/>
            <person name="Albermann K."/>
            <person name="Andersen M.R."/>
            <person name="Bendtsen J.D."/>
            <person name="Benen J.A.E."/>
            <person name="van den Berg M."/>
            <person name="Breestraat S."/>
            <person name="Caddick M.X."/>
            <person name="Contreras R."/>
            <person name="Cornell M."/>
            <person name="Coutinho P.M."/>
            <person name="Danchin E.G.J."/>
            <person name="Debets A.J.M."/>
            <person name="Dekker P."/>
            <person name="van Dijck P.W.M."/>
            <person name="van Dijk A."/>
            <person name="Dijkhuizen L."/>
            <person name="Driessen A.J.M."/>
            <person name="d'Enfert C."/>
            <person name="Geysens S."/>
            <person name="Goosen C."/>
            <person name="Groot G.S.P."/>
            <person name="de Groot P.W.J."/>
            <person name="Guillemette T."/>
            <person name="Henrissat B."/>
            <person name="Herweijer M."/>
            <person name="van den Hombergh J.P.T.W."/>
            <person name="van den Hondel C.A.M.J.J."/>
            <person name="van der Heijden R.T.J.M."/>
            <person name="van der Kaaij R.M."/>
            <person name="Klis F.M."/>
            <person name="Kools H.J."/>
            <person name="Kubicek C.P."/>
            <person name="van Kuyk P.A."/>
            <person name="Lauber J."/>
            <person name="Lu X."/>
            <person name="van der Maarel M.J.E.C."/>
            <person name="Meulenberg R."/>
            <person name="Menke H."/>
            <person name="Mortimer M.A."/>
            <person name="Nielsen J."/>
            <person name="Oliver S.G."/>
            <person name="Olsthoorn M."/>
            <person name="Pal K."/>
            <person name="van Peij N.N.M.E."/>
            <person name="Ram A.F.J."/>
            <person name="Rinas U."/>
            <person name="Roubos J.A."/>
            <person name="Sagt C.M.J."/>
            <person name="Schmoll M."/>
            <person name="Sun J."/>
            <person name="Ussery D."/>
            <person name="Varga J."/>
            <person name="Vervecken W."/>
            <person name="van de Vondervoort P.J.J."/>
            <person name="Wedler H."/>
            <person name="Woesten H.A.B."/>
            <person name="Zeng A.-P."/>
            <person name="van Ooyen A.J.J."/>
            <person name="Visser J."/>
            <person name="Stam H."/>
        </authorList>
    </citation>
    <scope>NUCLEOTIDE SEQUENCE [LARGE SCALE GENOMIC DNA]</scope>
    <source>
        <strain>ATCC MYA-4892 / CBS 513.88 / FGSC A1513</strain>
    </source>
</reference>
<name>MED31_ASPNC</name>
<proteinExistence type="inferred from homology"/>
<protein>
    <recommendedName>
        <fullName>Mediator of RNA polymerase II transcription subunit 31</fullName>
    </recommendedName>
    <alternativeName>
        <fullName>Mediator complex subunit 31</fullName>
    </alternativeName>
</protein>
<organism>
    <name type="scientific">Aspergillus niger (strain ATCC MYA-4892 / CBS 513.88 / FGSC A1513)</name>
    <dbReference type="NCBI Taxonomy" id="425011"/>
    <lineage>
        <taxon>Eukaryota</taxon>
        <taxon>Fungi</taxon>
        <taxon>Dikarya</taxon>
        <taxon>Ascomycota</taxon>
        <taxon>Pezizomycotina</taxon>
        <taxon>Eurotiomycetes</taxon>
        <taxon>Eurotiomycetidae</taxon>
        <taxon>Eurotiales</taxon>
        <taxon>Aspergillaceae</taxon>
        <taxon>Aspergillus</taxon>
        <taxon>Aspergillus subgen. Circumdati</taxon>
    </lineage>
</organism>
<gene>
    <name type="primary">soh1</name>
    <name type="synonym">med31</name>
    <name type="ORF">An09g04600</name>
</gene>
<accession>A2QU71</accession>
<feature type="chain" id="PRO_0000305717" description="Mediator of RNA polymerase II transcription subunit 31">
    <location>
        <begin position="1"/>
        <end position="151"/>
    </location>
</feature>
<feature type="region of interest" description="Disordered" evidence="2">
    <location>
        <begin position="1"/>
        <end position="20"/>
    </location>
</feature>
<feature type="region of interest" description="Disordered" evidence="2">
    <location>
        <begin position="131"/>
        <end position="151"/>
    </location>
</feature>
<feature type="compositionally biased region" description="Pro residues" evidence="2">
    <location>
        <begin position="1"/>
        <end position="18"/>
    </location>
</feature>
<keyword id="KW-0010">Activator</keyword>
<keyword id="KW-0539">Nucleus</keyword>
<keyword id="KW-1185">Reference proteome</keyword>
<keyword id="KW-0804">Transcription</keyword>
<keyword id="KW-0805">Transcription regulation</keyword>
<evidence type="ECO:0000250" key="1"/>
<evidence type="ECO:0000256" key="2">
    <source>
        <dbReference type="SAM" id="MobiDB-lite"/>
    </source>
</evidence>
<evidence type="ECO:0000305" key="3"/>
<comment type="function">
    <text evidence="1">Component of the Mediator complex, a coactivator involved in the regulated transcription of nearly all RNA polymerase II-dependent genes. Mediator functions as a bridge to convey information from gene-specific regulatory proteins to the basal RNA polymerase II transcription machinery. Mediator is recruited to promoters by direct interactions with regulatory proteins and serves as a scaffold for the assembly of a functional preinitiation complex with RNA polymerase II and the general transcription factors (By similarity).</text>
</comment>
<comment type="subunit">
    <text evidence="1">Component of the Mediator complex.</text>
</comment>
<comment type="subcellular location">
    <subcellularLocation>
        <location evidence="1">Nucleus</location>
    </subcellularLocation>
</comment>
<comment type="similarity">
    <text evidence="3">Belongs to the Mediator complex subunit 31 family.</text>
</comment>